<accession>Q6NEZ0</accession>
<protein>
    <recommendedName>
        <fullName evidence="1">Protein GrpE</fullName>
    </recommendedName>
    <alternativeName>
        <fullName evidence="1">HSP-70 cofactor</fullName>
    </alternativeName>
</protein>
<comment type="function">
    <text evidence="1">Participates actively in the response to hyperosmotic and heat shock by preventing the aggregation of stress-denatured proteins, in association with DnaK and GrpE. It is the nucleotide exchange factor for DnaK and may function as a thermosensor. Unfolded proteins bind initially to DnaJ; upon interaction with the DnaJ-bound protein, DnaK hydrolyzes its bound ATP, resulting in the formation of a stable complex. GrpE releases ADP from DnaK; ATP binding to DnaK triggers the release of the substrate protein, thus completing the reaction cycle. Several rounds of ATP-dependent interactions between DnaJ, DnaK and GrpE are required for fully efficient folding.</text>
</comment>
<comment type="subunit">
    <text evidence="1">Homodimer.</text>
</comment>
<comment type="subcellular location">
    <subcellularLocation>
        <location evidence="1">Cytoplasm</location>
    </subcellularLocation>
</comment>
<comment type="similarity">
    <text evidence="1">Belongs to the GrpE family.</text>
</comment>
<feature type="chain" id="PRO_0000113776" description="Protein GrpE">
    <location>
        <begin position="1"/>
        <end position="219"/>
    </location>
</feature>
<feature type="region of interest" description="Disordered" evidence="2">
    <location>
        <begin position="1"/>
        <end position="32"/>
    </location>
</feature>
<feature type="region of interest" description="Disordered" evidence="2">
    <location>
        <begin position="59"/>
        <end position="87"/>
    </location>
</feature>
<evidence type="ECO:0000255" key="1">
    <source>
        <dbReference type="HAMAP-Rule" id="MF_01151"/>
    </source>
</evidence>
<evidence type="ECO:0000256" key="2">
    <source>
        <dbReference type="SAM" id="MobiDB-lite"/>
    </source>
</evidence>
<proteinExistence type="inferred from homology"/>
<gene>
    <name evidence="1" type="primary">grpE</name>
    <name type="ordered locus">DIP2119</name>
</gene>
<dbReference type="EMBL" id="BX248360">
    <property type="protein sequence ID" value="CAE50649.1"/>
    <property type="molecule type" value="Genomic_DNA"/>
</dbReference>
<dbReference type="RefSeq" id="WP_010935590.1">
    <property type="nucleotide sequence ID" value="NC_002935.2"/>
</dbReference>
<dbReference type="SMR" id="Q6NEZ0"/>
<dbReference type="STRING" id="257309.DIP2119"/>
<dbReference type="GeneID" id="29422417"/>
<dbReference type="KEGG" id="cdi:DIP2119"/>
<dbReference type="HOGENOM" id="CLU_057217_4_1_11"/>
<dbReference type="Proteomes" id="UP000002198">
    <property type="component" value="Chromosome"/>
</dbReference>
<dbReference type="GO" id="GO:0005737">
    <property type="term" value="C:cytoplasm"/>
    <property type="evidence" value="ECO:0007669"/>
    <property type="project" value="UniProtKB-SubCell"/>
</dbReference>
<dbReference type="GO" id="GO:0000774">
    <property type="term" value="F:adenyl-nucleotide exchange factor activity"/>
    <property type="evidence" value="ECO:0007669"/>
    <property type="project" value="InterPro"/>
</dbReference>
<dbReference type="GO" id="GO:0042803">
    <property type="term" value="F:protein homodimerization activity"/>
    <property type="evidence" value="ECO:0007669"/>
    <property type="project" value="InterPro"/>
</dbReference>
<dbReference type="GO" id="GO:0051087">
    <property type="term" value="F:protein-folding chaperone binding"/>
    <property type="evidence" value="ECO:0007669"/>
    <property type="project" value="InterPro"/>
</dbReference>
<dbReference type="GO" id="GO:0051082">
    <property type="term" value="F:unfolded protein binding"/>
    <property type="evidence" value="ECO:0007669"/>
    <property type="project" value="TreeGrafter"/>
</dbReference>
<dbReference type="GO" id="GO:0006457">
    <property type="term" value="P:protein folding"/>
    <property type="evidence" value="ECO:0007669"/>
    <property type="project" value="InterPro"/>
</dbReference>
<dbReference type="CDD" id="cd00446">
    <property type="entry name" value="GrpE"/>
    <property type="match status" value="1"/>
</dbReference>
<dbReference type="Gene3D" id="3.90.20.20">
    <property type="match status" value="1"/>
</dbReference>
<dbReference type="Gene3D" id="2.30.22.10">
    <property type="entry name" value="Head domain of nucleotide exchange factor GrpE"/>
    <property type="match status" value="1"/>
</dbReference>
<dbReference type="HAMAP" id="MF_01151">
    <property type="entry name" value="GrpE"/>
    <property type="match status" value="1"/>
</dbReference>
<dbReference type="InterPro" id="IPR000740">
    <property type="entry name" value="GrpE"/>
</dbReference>
<dbReference type="InterPro" id="IPR013805">
    <property type="entry name" value="GrpE_coiled_coil"/>
</dbReference>
<dbReference type="InterPro" id="IPR009012">
    <property type="entry name" value="GrpE_head"/>
</dbReference>
<dbReference type="NCBIfam" id="NF010761">
    <property type="entry name" value="PRK14164.1"/>
    <property type="match status" value="1"/>
</dbReference>
<dbReference type="PANTHER" id="PTHR21237">
    <property type="entry name" value="GRPE PROTEIN"/>
    <property type="match status" value="1"/>
</dbReference>
<dbReference type="PANTHER" id="PTHR21237:SF23">
    <property type="entry name" value="GRPE PROTEIN HOMOLOG, MITOCHONDRIAL"/>
    <property type="match status" value="1"/>
</dbReference>
<dbReference type="Pfam" id="PF01025">
    <property type="entry name" value="GrpE"/>
    <property type="match status" value="1"/>
</dbReference>
<dbReference type="PRINTS" id="PR00773">
    <property type="entry name" value="GRPEPROTEIN"/>
</dbReference>
<dbReference type="SUPFAM" id="SSF58014">
    <property type="entry name" value="Coiled-coil domain of nucleotide exchange factor GrpE"/>
    <property type="match status" value="1"/>
</dbReference>
<dbReference type="SUPFAM" id="SSF51064">
    <property type="entry name" value="Head domain of nucleotide exchange factor GrpE"/>
    <property type="match status" value="1"/>
</dbReference>
<dbReference type="PROSITE" id="PS01071">
    <property type="entry name" value="GRPE"/>
    <property type="match status" value="1"/>
</dbReference>
<keyword id="KW-0143">Chaperone</keyword>
<keyword id="KW-0963">Cytoplasm</keyword>
<keyword id="KW-1185">Reference proteome</keyword>
<keyword id="KW-0346">Stress response</keyword>
<name>GRPE_CORDI</name>
<organism>
    <name type="scientific">Corynebacterium diphtheriae (strain ATCC 700971 / NCTC 13129 / Biotype gravis)</name>
    <dbReference type="NCBI Taxonomy" id="257309"/>
    <lineage>
        <taxon>Bacteria</taxon>
        <taxon>Bacillati</taxon>
        <taxon>Actinomycetota</taxon>
        <taxon>Actinomycetes</taxon>
        <taxon>Mycobacteriales</taxon>
        <taxon>Corynebacteriaceae</taxon>
        <taxon>Corynebacterium</taxon>
    </lineage>
</organism>
<sequence length="219" mass="23890">MSTTDNTNGDDRRPGQPEWDDEENNFEHLDATEVPAEEEALVESAGLDADTLADLEDAFDGVDASTEDPGATVGETSTLESELAERTEDLQRLSAEYANYRRRTDRERKVGVEAAKAKVLGELLPILDDLELAQKHGDLDEGPLKAFRDKLVSVVEGLGVSAFGAEGDVFDAERHEAVQDLSSGDDKVLGTVLRRGYQMNDRLLRTAMVIIADPAEDAQ</sequence>
<reference key="1">
    <citation type="journal article" date="2003" name="Nucleic Acids Res.">
        <title>The complete genome sequence and analysis of Corynebacterium diphtheriae NCTC13129.</title>
        <authorList>
            <person name="Cerdeno-Tarraga A.-M."/>
            <person name="Efstratiou A."/>
            <person name="Dover L.G."/>
            <person name="Holden M.T.G."/>
            <person name="Pallen M.J."/>
            <person name="Bentley S.D."/>
            <person name="Besra G.S."/>
            <person name="Churcher C.M."/>
            <person name="James K.D."/>
            <person name="De Zoysa A."/>
            <person name="Chillingworth T."/>
            <person name="Cronin A."/>
            <person name="Dowd L."/>
            <person name="Feltwell T."/>
            <person name="Hamlin N."/>
            <person name="Holroyd S."/>
            <person name="Jagels K."/>
            <person name="Moule S."/>
            <person name="Quail M.A."/>
            <person name="Rabbinowitsch E."/>
            <person name="Rutherford K.M."/>
            <person name="Thomson N.R."/>
            <person name="Unwin L."/>
            <person name="Whitehead S."/>
            <person name="Barrell B.G."/>
            <person name="Parkhill J."/>
        </authorList>
    </citation>
    <scope>NUCLEOTIDE SEQUENCE [LARGE SCALE GENOMIC DNA]</scope>
    <source>
        <strain>ATCC 700971 / NCTC 13129 / Biotype gravis</strain>
    </source>
</reference>